<proteinExistence type="evidence at protein level"/>
<accession>Q8BMI0</accession>
<accession>Q8BTQ4</accession>
<accession>Q8C0H4</accession>
<organism>
    <name type="scientific">Mus musculus</name>
    <name type="common">Mouse</name>
    <dbReference type="NCBI Taxonomy" id="10090"/>
    <lineage>
        <taxon>Eukaryota</taxon>
        <taxon>Metazoa</taxon>
        <taxon>Chordata</taxon>
        <taxon>Craniata</taxon>
        <taxon>Vertebrata</taxon>
        <taxon>Euteleostomi</taxon>
        <taxon>Mammalia</taxon>
        <taxon>Eutheria</taxon>
        <taxon>Euarchontoglires</taxon>
        <taxon>Glires</taxon>
        <taxon>Rodentia</taxon>
        <taxon>Myomorpha</taxon>
        <taxon>Muroidea</taxon>
        <taxon>Muridae</taxon>
        <taxon>Murinae</taxon>
        <taxon>Mus</taxon>
        <taxon>Mus</taxon>
    </lineage>
</organism>
<name>FBX38_MOUSE</name>
<dbReference type="EMBL" id="AY267463">
    <property type="protein sequence ID" value="AAP31028.1"/>
    <property type="molecule type" value="mRNA"/>
</dbReference>
<dbReference type="EMBL" id="AK089046">
    <property type="protein sequence ID" value="BAC40718.1"/>
    <property type="molecule type" value="mRNA"/>
</dbReference>
<dbReference type="EMBL" id="AK031096">
    <property type="protein sequence ID" value="BAC27250.1"/>
    <property type="molecule type" value="mRNA"/>
</dbReference>
<dbReference type="EMBL" id="AK031347">
    <property type="protein sequence ID" value="BAC27358.1"/>
    <property type="molecule type" value="mRNA"/>
</dbReference>
<dbReference type="EMBL" id="BC056348">
    <property type="protein sequence ID" value="AAH56348.1"/>
    <property type="molecule type" value="mRNA"/>
</dbReference>
<dbReference type="CCDS" id="CCDS37841.1"/>
<dbReference type="RefSeq" id="NP_598897.2">
    <property type="nucleotide sequence ID" value="NM_134136.4"/>
</dbReference>
<dbReference type="RefSeq" id="XP_030106123.1">
    <property type="nucleotide sequence ID" value="XM_030250263.2"/>
</dbReference>
<dbReference type="RefSeq" id="XP_030106124.1">
    <property type="nucleotide sequence ID" value="XM_030250264.2"/>
</dbReference>
<dbReference type="FunCoup" id="Q8BMI0">
    <property type="interactions" value="5130"/>
</dbReference>
<dbReference type="STRING" id="10090.ENSMUSP00000047541"/>
<dbReference type="GlyConnect" id="2309">
    <property type="glycosylation" value="1 N-Linked glycan (1 site)"/>
</dbReference>
<dbReference type="GlyCosmos" id="Q8BMI0">
    <property type="glycosylation" value="1 site, 1 glycan"/>
</dbReference>
<dbReference type="GlyGen" id="Q8BMI0">
    <property type="glycosylation" value="2 sites, 2 N-linked glycans (2 sites)"/>
</dbReference>
<dbReference type="iPTMnet" id="Q8BMI0"/>
<dbReference type="PhosphoSitePlus" id="Q8BMI0"/>
<dbReference type="jPOST" id="Q8BMI0"/>
<dbReference type="PaxDb" id="10090-ENSMUSP00000047541"/>
<dbReference type="PeptideAtlas" id="Q8BMI0"/>
<dbReference type="ProteomicsDB" id="271675"/>
<dbReference type="Pumba" id="Q8BMI0"/>
<dbReference type="Antibodypedia" id="27733">
    <property type="antibodies" value="71 antibodies from 14 providers"/>
</dbReference>
<dbReference type="Ensembl" id="ENSMUST00000048688.8">
    <property type="protein sequence ID" value="ENSMUSP00000047541.7"/>
    <property type="gene ID" value="ENSMUSG00000042211.8"/>
</dbReference>
<dbReference type="GeneID" id="107035"/>
<dbReference type="KEGG" id="mmu:107035"/>
<dbReference type="UCSC" id="uc012bdv.1">
    <property type="organism name" value="mouse"/>
</dbReference>
<dbReference type="AGR" id="MGI:2444639"/>
<dbReference type="CTD" id="81545"/>
<dbReference type="MGI" id="MGI:2444639">
    <property type="gene designation" value="Fbxo38"/>
</dbReference>
<dbReference type="VEuPathDB" id="HostDB:ENSMUSG00000042211"/>
<dbReference type="eggNOG" id="ENOG502QSUC">
    <property type="taxonomic scope" value="Eukaryota"/>
</dbReference>
<dbReference type="GeneTree" id="ENSGT00390000013163"/>
<dbReference type="HOGENOM" id="CLU_010774_0_0_1"/>
<dbReference type="InParanoid" id="Q8BMI0"/>
<dbReference type="OMA" id="ACITNNI"/>
<dbReference type="OrthoDB" id="10036898at2759"/>
<dbReference type="PhylomeDB" id="Q8BMI0"/>
<dbReference type="TreeFam" id="TF331125"/>
<dbReference type="UniPathway" id="UPA00143"/>
<dbReference type="BioGRID-ORCS" id="107035">
    <property type="hits" value="2 hits in 77 CRISPR screens"/>
</dbReference>
<dbReference type="ChiTaRS" id="Fbxo38">
    <property type="organism name" value="mouse"/>
</dbReference>
<dbReference type="PRO" id="PR:Q8BMI0"/>
<dbReference type="Proteomes" id="UP000000589">
    <property type="component" value="Chromosome 18"/>
</dbReference>
<dbReference type="RNAct" id="Q8BMI0">
    <property type="molecule type" value="protein"/>
</dbReference>
<dbReference type="Bgee" id="ENSMUSG00000042211">
    <property type="expression patterns" value="Expressed in saccule of membranous labyrinth and 257 other cell types or tissues"/>
</dbReference>
<dbReference type="ExpressionAtlas" id="Q8BMI0">
    <property type="expression patterns" value="baseline and differential"/>
</dbReference>
<dbReference type="GO" id="GO:0005737">
    <property type="term" value="C:cytoplasm"/>
    <property type="evidence" value="ECO:0000314"/>
    <property type="project" value="UniProtKB"/>
</dbReference>
<dbReference type="GO" id="GO:0005829">
    <property type="term" value="C:cytosol"/>
    <property type="evidence" value="ECO:0007669"/>
    <property type="project" value="UniProtKB-SubCell"/>
</dbReference>
<dbReference type="GO" id="GO:0005634">
    <property type="term" value="C:nucleus"/>
    <property type="evidence" value="ECO:0000314"/>
    <property type="project" value="UniProtKB"/>
</dbReference>
<dbReference type="GO" id="GO:1990756">
    <property type="term" value="F:ubiquitin-like ligase-substrate adaptor activity"/>
    <property type="evidence" value="ECO:0007669"/>
    <property type="project" value="Ensembl"/>
</dbReference>
<dbReference type="GO" id="GO:0002250">
    <property type="term" value="P:adaptive immune response"/>
    <property type="evidence" value="ECO:0007669"/>
    <property type="project" value="UniProtKB-KW"/>
</dbReference>
<dbReference type="GO" id="GO:0010976">
    <property type="term" value="P:positive regulation of neuron projection development"/>
    <property type="evidence" value="ECO:0000266"/>
    <property type="project" value="MGI"/>
</dbReference>
<dbReference type="GO" id="GO:0050870">
    <property type="term" value="P:positive regulation of T cell activation"/>
    <property type="evidence" value="ECO:0007669"/>
    <property type="project" value="Ensembl"/>
</dbReference>
<dbReference type="GO" id="GO:0002842">
    <property type="term" value="P:positive regulation of T cell mediated immune response to tumor cell"/>
    <property type="evidence" value="ECO:0000250"/>
    <property type="project" value="UniProtKB"/>
</dbReference>
<dbReference type="GO" id="GO:0070936">
    <property type="term" value="P:protein K48-linked ubiquitination"/>
    <property type="evidence" value="ECO:0000250"/>
    <property type="project" value="UniProtKB"/>
</dbReference>
<dbReference type="GO" id="GO:0031146">
    <property type="term" value="P:SCF-dependent proteasomal ubiquitin-dependent protein catabolic process"/>
    <property type="evidence" value="ECO:0000250"/>
    <property type="project" value="UniProtKB"/>
</dbReference>
<dbReference type="CDD" id="cd22107">
    <property type="entry name" value="F-box_FBXO38"/>
    <property type="match status" value="1"/>
</dbReference>
<dbReference type="Gene3D" id="1.20.1280.50">
    <property type="match status" value="1"/>
</dbReference>
<dbReference type="Gene3D" id="3.80.10.10">
    <property type="entry name" value="Ribonuclease Inhibitor"/>
    <property type="match status" value="1"/>
</dbReference>
<dbReference type="InterPro" id="IPR036047">
    <property type="entry name" value="F-box-like_dom_sf"/>
</dbReference>
<dbReference type="InterPro" id="IPR001810">
    <property type="entry name" value="F-box_dom"/>
</dbReference>
<dbReference type="InterPro" id="IPR042354">
    <property type="entry name" value="FBX38"/>
</dbReference>
<dbReference type="InterPro" id="IPR032675">
    <property type="entry name" value="LRR_dom_sf"/>
</dbReference>
<dbReference type="PANTHER" id="PTHR14753">
    <property type="entry name" value="F-BOX ONLY PROTEIN 38"/>
    <property type="match status" value="1"/>
</dbReference>
<dbReference type="PANTHER" id="PTHR14753:SF3">
    <property type="entry name" value="F-BOX ONLY PROTEIN 38"/>
    <property type="match status" value="1"/>
</dbReference>
<dbReference type="Pfam" id="PF00646">
    <property type="entry name" value="F-box"/>
    <property type="match status" value="1"/>
</dbReference>
<dbReference type="SUPFAM" id="SSF81383">
    <property type="entry name" value="F-box domain"/>
    <property type="match status" value="1"/>
</dbReference>
<dbReference type="SUPFAM" id="SSF52047">
    <property type="entry name" value="RNI-like"/>
    <property type="match status" value="1"/>
</dbReference>
<evidence type="ECO:0000250" key="1">
    <source>
        <dbReference type="UniProtKB" id="Q6PIJ6"/>
    </source>
</evidence>
<evidence type="ECO:0000255" key="2">
    <source>
        <dbReference type="PROSITE-ProRule" id="PRU00080"/>
    </source>
</evidence>
<evidence type="ECO:0000256" key="3">
    <source>
        <dbReference type="SAM" id="MobiDB-lite"/>
    </source>
</evidence>
<evidence type="ECO:0000269" key="4">
    <source>
    </source>
</evidence>
<evidence type="ECO:0000269" key="5">
    <source>
    </source>
</evidence>
<evidence type="ECO:0000269" key="6">
    <source>
    </source>
</evidence>
<evidence type="ECO:0000303" key="7">
    <source>
    </source>
</evidence>
<evidence type="ECO:0000305" key="8"/>
<evidence type="ECO:0000312" key="9">
    <source>
        <dbReference type="MGI" id="MGI:2444639"/>
    </source>
</evidence>
<evidence type="ECO:0007744" key="10">
    <source>
    </source>
</evidence>
<feature type="chain" id="PRO_0000119934" description="F-box only protein 38">
    <location>
        <begin position="1"/>
        <end position="1194"/>
    </location>
</feature>
<feature type="domain" description="F-box" evidence="2">
    <location>
        <begin position="30"/>
        <end position="75"/>
    </location>
</feature>
<feature type="region of interest" description="Interaction with KLF7" evidence="4">
    <location>
        <begin position="59"/>
        <end position="119"/>
    </location>
</feature>
<feature type="region of interest" description="Disordered" evidence="3">
    <location>
        <begin position="487"/>
        <end position="529"/>
    </location>
</feature>
<feature type="region of interest" description="Disordered" evidence="3">
    <location>
        <begin position="577"/>
        <end position="776"/>
    </location>
</feature>
<feature type="region of interest" description="Disordered" evidence="3">
    <location>
        <begin position="793"/>
        <end position="879"/>
    </location>
</feature>
<feature type="region of interest" description="Disordered" evidence="3">
    <location>
        <begin position="896"/>
        <end position="915"/>
    </location>
</feature>
<feature type="short sequence motif" description="Nuclear export signal 1" evidence="5">
    <location>
        <begin position="194"/>
        <end position="201"/>
    </location>
</feature>
<feature type="short sequence motif" description="Nuclear export signal 2" evidence="5">
    <location>
        <begin position="307"/>
        <end position="316"/>
    </location>
</feature>
<feature type="short sequence motif" description="Nuclear export signal 3" evidence="5">
    <location>
        <begin position="451"/>
        <end position="460"/>
    </location>
</feature>
<feature type="short sequence motif" description="Nuclear localization signal" evidence="5">
    <location>
        <begin position="902"/>
        <end position="905"/>
    </location>
</feature>
<feature type="compositionally biased region" description="Low complexity" evidence="3">
    <location>
        <begin position="493"/>
        <end position="510"/>
    </location>
</feature>
<feature type="compositionally biased region" description="Acidic residues" evidence="3">
    <location>
        <begin position="599"/>
        <end position="609"/>
    </location>
</feature>
<feature type="compositionally biased region" description="Basic and acidic residues" evidence="3">
    <location>
        <begin position="622"/>
        <end position="631"/>
    </location>
</feature>
<feature type="compositionally biased region" description="Basic and acidic residues" evidence="3">
    <location>
        <begin position="683"/>
        <end position="701"/>
    </location>
</feature>
<feature type="compositionally biased region" description="Low complexity" evidence="3">
    <location>
        <begin position="705"/>
        <end position="728"/>
    </location>
</feature>
<feature type="compositionally biased region" description="Acidic residues" evidence="3">
    <location>
        <begin position="764"/>
        <end position="774"/>
    </location>
</feature>
<feature type="compositionally biased region" description="Basic and acidic residues" evidence="3">
    <location>
        <begin position="793"/>
        <end position="804"/>
    </location>
</feature>
<feature type="compositionally biased region" description="Polar residues" evidence="3">
    <location>
        <begin position="855"/>
        <end position="867"/>
    </location>
</feature>
<feature type="compositionally biased region" description="Basic residues" evidence="3">
    <location>
        <begin position="896"/>
        <end position="906"/>
    </location>
</feature>
<feature type="modified residue" description="Phosphothreonine" evidence="10">
    <location>
        <position position="592"/>
    </location>
</feature>
<feature type="modified residue" description="Phosphoserine" evidence="10">
    <location>
        <position position="599"/>
    </location>
</feature>
<feature type="modified residue" description="Phosphoserine" evidence="10">
    <location>
        <position position="601"/>
    </location>
</feature>
<feature type="modified residue" description="Phosphoserine" evidence="10">
    <location>
        <position position="607"/>
    </location>
</feature>
<feature type="modified residue" description="Phosphoserine" evidence="1">
    <location>
        <position position="742"/>
    </location>
</feature>
<feature type="modified residue" description="Phosphoserine" evidence="10">
    <location>
        <position position="746"/>
    </location>
</feature>
<feature type="mutagenesis site" description="Decreased cytoplasmic localization." evidence="5">
    <original>LHL</original>
    <variation>AHA</variation>
    <location>
        <begin position="194"/>
        <end position="196"/>
    </location>
</feature>
<feature type="mutagenesis site" description="Decreased cytoplasmic localization." evidence="5">
    <original>LEHLEMVRVPFL</original>
    <variation>AEHAEMVRVPFA</variation>
    <location>
        <begin position="264"/>
        <end position="275"/>
    </location>
</feature>
<feature type="mutagenesis site" description="Impaired nuclear localization." evidence="5">
    <original>KRK</original>
    <variation>RRR</variation>
    <location>
        <begin position="902"/>
        <end position="904"/>
    </location>
</feature>
<feature type="sequence conflict" description="In Ref. 2; BAC40718." evidence="8" ref="2">
    <original>T</original>
    <variation>M</variation>
    <location>
        <position position="659"/>
    </location>
</feature>
<feature type="sequence conflict" description="In Ref. 1; AAP31028 and 2; BAC40718." evidence="8" ref="1 2">
    <location>
        <position position="712"/>
    </location>
</feature>
<feature type="sequence conflict" description="In Ref. 2; BAC40718." evidence="8" ref="2">
    <original>A</original>
    <variation>T</variation>
    <location>
        <position position="715"/>
    </location>
</feature>
<feature type="sequence conflict" description="In Ref. 2; BAC27358." evidence="8" ref="2">
    <original>M</original>
    <variation>K</variation>
    <location>
        <position position="1163"/>
    </location>
</feature>
<feature type="sequence conflict" description="In Ref. 2; BAC27358." evidence="8" ref="2">
    <original>N</original>
    <variation>H</variation>
    <location>
        <position position="1185"/>
    </location>
</feature>
<protein>
    <recommendedName>
        <fullName evidence="8">F-box only protein 38</fullName>
    </recommendedName>
    <alternativeName>
        <fullName evidence="7">Modulator of KLF7 activity</fullName>
        <shortName evidence="7">MoKA</shortName>
    </alternativeName>
</protein>
<comment type="function">
    <text evidence="4 5 6">Substrate recognition component of a SCF (SKP1-CUL1-F-box protein) E3 ubiquitin-protein ligase complex which mediates the ubiquitination and subsequent proteasomal degradation of PDCD1/PD-1, thereby regulating T-cells-mediated immunity (PubMed:30487606). Required for anti-tumor activity of T-cells by promoting the degradation of PDCD1/PD-1; the PDCD1-mediated inhibitory pathway being exploited by tumors to attenuate anti-tumor immunity and facilitate tumor survival (PubMed:30487606). May indirectly stimulate the activity of transcription factor KLF7, a regulator of neuronal differentiation, without promoting KLF7 ubiquitination (PubMed:14729953, PubMed:16990251).</text>
</comment>
<comment type="pathway">
    <text evidence="1">Protein modification; protein ubiquitination.</text>
</comment>
<comment type="subunit">
    <text evidence="1 4">Part of the SCF (SKP1-CUL1-F-box) E3 ubiquitin-protein ligase complex SCF(FBXO38) composed of CUL1, SKP1, RBX1 and FBXO38 (By similarity). Interacts with KLF7 (PubMed:14729953). Interacts with PDCD1/PD-1 (By similarity).</text>
</comment>
<comment type="subcellular location">
    <subcellularLocation>
        <location evidence="4 5">Cytoplasm</location>
        <location evidence="4 5">Cytosol</location>
    </subcellularLocation>
    <subcellularLocation>
        <location evidence="4 5">Nucleus</location>
    </subcellularLocation>
    <text evidence="5">Accumulates predominantly in the cytosol (PubMed:16990251). Exported from the nucleus in a XPO1/CRM1-dependent manner (PubMed:16990251).</text>
</comment>
<comment type="tissue specificity">
    <text evidence="4">Expressed at high levels in embryo (developing brain, spinal cord, branchial arms and limbs) (PubMed:14729953). Widely expressed at low levels in adult tissues, with highest expression in testis. Expressed in postmeiotic spermatids (PubMed:14729953).</text>
</comment>
<comment type="developmental stage">
    <text evidence="4">In embryo expressed at 11 dpc, 15 dpc and 17 dpc.</text>
</comment>
<comment type="induction">
    <text evidence="6">Up-regulated by IL2 (PubMed:30487606). Down-regulated in tumor-infiltrating T-cells (PubMed:30487606).</text>
</comment>
<comment type="disruption phenotype">
    <text evidence="6">Conditional deletion in T-cells does not affect the development, peripheral homeostasis and population of memory T-cells, but leads to faster tumor progression (PubMed:30487606). Faster tumor progression is caused by higher levels of Pdcd1/PD-1 in tumor-infiltrating T-cells (PubMed:30487606).</text>
</comment>
<keyword id="KW-1064">Adaptive immunity</keyword>
<keyword id="KW-0963">Cytoplasm</keyword>
<keyword id="KW-0391">Immunity</keyword>
<keyword id="KW-0539">Nucleus</keyword>
<keyword id="KW-0597">Phosphoprotein</keyword>
<keyword id="KW-1185">Reference proteome</keyword>
<keyword id="KW-0833">Ubl conjugation pathway</keyword>
<gene>
    <name evidence="9" type="primary">Fbxo38</name>
</gene>
<sequence length="1194" mass="133928">MGPRKKSAKVCVMDSEVAEEMTADEEKDYMNQLSHEVLCHIFRYLPLQDIMCMECLSRKLKEAVTLYLRVVRVVDLCAGRWWEYMPSGFTDSSFLTLLKKMPDVEQLYGLHPRYLERRRVRGQEAFSIPGVLEALQACPNLVGVETSHLELVESIWTYMPHVHILGKFRNRNGAFPIPPENKLKIPIGAKIQTLHLVGVNVPEIPCIPMLRHLYMKWVRLTKPQPFKDFLCISLRTFVMRNCAGPTNSLKYVPLVTGLASARNLEHLEMVRVPFLGGLIQHVVEDSWRSGGFRNLHTIVLGACKNALEVDLGYLIITAARRLHEVRIQPSLTKDGVFSALKMAELEFPQFETLHLGYVDEFLLQSRMANADLVKYGLADVVENPGIITDIGMKAVNEVFSCIKYLAIYNCPHLHNPYNWISDHSRWMRLVDINLVRCHALKLDSFGQFVELLPSLEFISLDQMFREPPKGCARVGLSAGTGIGVSSALVSNQNSNNDNDNNAPNNNANLHDNNHHHPDDSDDDNDFRPDLQAGEAQFAADALNEMEDMVQEDGELVAESGNGMPAHNREVLPVDADEEQAGPSGLQRVVKPTPIADHDSESDDEEDSLELQEVWAPKNGTRRYSEREEKTGDSGQSRETAVSGKGKTPLRKRCNNSHQTGQAKPFPLEESSCEKGCQVTSEQIKADMKAARDVSEKKKSKDVYPSCSSSSSSTAASTAGNASSPSTASQSPDFARTVTSSGSSEPSPPEVDVSRQCVCSPGGSEDSEAMEEGDAESSVCPRCCCLRPQESQRRTGRCSDEERPSTSRACVVNGADGTRSAFSFRTLPQGGSSGPAHDERTNGSGCGATGEDRRGSSQPESCDVQSNEDYPRRPLTRARSRLSHVPLISESEVAKTKPCHAMKRKRTADKSTSTSDPVIEDDHVQVLVLKSKNLVGVTMTNCGITDLVLKDCPKMMFIHATRCRVLKHLKVENAPIVNRFDYAQCKKLNMDQVLDQILRMPPERNRIIYLRPMQQVDTLTLEQKLFSGPYPYHICIIHEFSNPPNVRNKVRIRNWMDTIANINQELIKYEFFLEATRTEEDLKKYPKYPWGREIYTLEGVVDGAPYSMISDFPWLRSLRTAEPNSFARYDFEDDEESTIYAPRRKGQLSADICMETIGEEISEMRQMKRGIFQRVVAIFIHYCDVNGEPVEDDYI</sequence>
<reference key="1">
    <citation type="journal article" date="2004" name="Mol. Cell. Biol.">
        <title>Identification of MoKA, a novel F-box protein that modulates Krueppel-like transcription factor 7 activity.</title>
        <authorList>
            <person name="Smaldone S."/>
            <person name="Laub F."/>
            <person name="Else C."/>
            <person name="Dragomir C."/>
            <person name="Ramirez F."/>
        </authorList>
    </citation>
    <scope>NUCLEOTIDE SEQUENCE [MRNA]</scope>
    <scope>FUNCTION</scope>
    <scope>SUBCELLULAR LOCATION</scope>
    <scope>TISSUE SPECIFICITY</scope>
    <scope>DEVELOPMENTAL STAGE</scope>
    <scope>INTERACTION WITH KLF7</scope>
    <source>
        <strain>FVB/N</strain>
    </source>
</reference>
<reference key="2">
    <citation type="journal article" date="2005" name="Science">
        <title>The transcriptional landscape of the mammalian genome.</title>
        <authorList>
            <person name="Carninci P."/>
            <person name="Kasukawa T."/>
            <person name="Katayama S."/>
            <person name="Gough J."/>
            <person name="Frith M.C."/>
            <person name="Maeda N."/>
            <person name="Oyama R."/>
            <person name="Ravasi T."/>
            <person name="Lenhard B."/>
            <person name="Wells C."/>
            <person name="Kodzius R."/>
            <person name="Shimokawa K."/>
            <person name="Bajic V.B."/>
            <person name="Brenner S.E."/>
            <person name="Batalov S."/>
            <person name="Forrest A.R."/>
            <person name="Zavolan M."/>
            <person name="Davis M.J."/>
            <person name="Wilming L.G."/>
            <person name="Aidinis V."/>
            <person name="Allen J.E."/>
            <person name="Ambesi-Impiombato A."/>
            <person name="Apweiler R."/>
            <person name="Aturaliya R.N."/>
            <person name="Bailey T.L."/>
            <person name="Bansal M."/>
            <person name="Baxter L."/>
            <person name="Beisel K.W."/>
            <person name="Bersano T."/>
            <person name="Bono H."/>
            <person name="Chalk A.M."/>
            <person name="Chiu K.P."/>
            <person name="Choudhary V."/>
            <person name="Christoffels A."/>
            <person name="Clutterbuck D.R."/>
            <person name="Crowe M.L."/>
            <person name="Dalla E."/>
            <person name="Dalrymple B.P."/>
            <person name="de Bono B."/>
            <person name="Della Gatta G."/>
            <person name="di Bernardo D."/>
            <person name="Down T."/>
            <person name="Engstrom P."/>
            <person name="Fagiolini M."/>
            <person name="Faulkner G."/>
            <person name="Fletcher C.F."/>
            <person name="Fukushima T."/>
            <person name="Furuno M."/>
            <person name="Futaki S."/>
            <person name="Gariboldi M."/>
            <person name="Georgii-Hemming P."/>
            <person name="Gingeras T.R."/>
            <person name="Gojobori T."/>
            <person name="Green R.E."/>
            <person name="Gustincich S."/>
            <person name="Harbers M."/>
            <person name="Hayashi Y."/>
            <person name="Hensch T.K."/>
            <person name="Hirokawa N."/>
            <person name="Hill D."/>
            <person name="Huminiecki L."/>
            <person name="Iacono M."/>
            <person name="Ikeo K."/>
            <person name="Iwama A."/>
            <person name="Ishikawa T."/>
            <person name="Jakt M."/>
            <person name="Kanapin A."/>
            <person name="Katoh M."/>
            <person name="Kawasawa Y."/>
            <person name="Kelso J."/>
            <person name="Kitamura H."/>
            <person name="Kitano H."/>
            <person name="Kollias G."/>
            <person name="Krishnan S.P."/>
            <person name="Kruger A."/>
            <person name="Kummerfeld S.K."/>
            <person name="Kurochkin I.V."/>
            <person name="Lareau L.F."/>
            <person name="Lazarevic D."/>
            <person name="Lipovich L."/>
            <person name="Liu J."/>
            <person name="Liuni S."/>
            <person name="McWilliam S."/>
            <person name="Madan Babu M."/>
            <person name="Madera M."/>
            <person name="Marchionni L."/>
            <person name="Matsuda H."/>
            <person name="Matsuzawa S."/>
            <person name="Miki H."/>
            <person name="Mignone F."/>
            <person name="Miyake S."/>
            <person name="Morris K."/>
            <person name="Mottagui-Tabar S."/>
            <person name="Mulder N."/>
            <person name="Nakano N."/>
            <person name="Nakauchi H."/>
            <person name="Ng P."/>
            <person name="Nilsson R."/>
            <person name="Nishiguchi S."/>
            <person name="Nishikawa S."/>
            <person name="Nori F."/>
            <person name="Ohara O."/>
            <person name="Okazaki Y."/>
            <person name="Orlando V."/>
            <person name="Pang K.C."/>
            <person name="Pavan W.J."/>
            <person name="Pavesi G."/>
            <person name="Pesole G."/>
            <person name="Petrovsky N."/>
            <person name="Piazza S."/>
            <person name="Reed J."/>
            <person name="Reid J.F."/>
            <person name="Ring B.Z."/>
            <person name="Ringwald M."/>
            <person name="Rost B."/>
            <person name="Ruan Y."/>
            <person name="Salzberg S.L."/>
            <person name="Sandelin A."/>
            <person name="Schneider C."/>
            <person name="Schoenbach C."/>
            <person name="Sekiguchi K."/>
            <person name="Semple C.A."/>
            <person name="Seno S."/>
            <person name="Sessa L."/>
            <person name="Sheng Y."/>
            <person name="Shibata Y."/>
            <person name="Shimada H."/>
            <person name="Shimada K."/>
            <person name="Silva D."/>
            <person name="Sinclair B."/>
            <person name="Sperling S."/>
            <person name="Stupka E."/>
            <person name="Sugiura K."/>
            <person name="Sultana R."/>
            <person name="Takenaka Y."/>
            <person name="Taki K."/>
            <person name="Tammoja K."/>
            <person name="Tan S.L."/>
            <person name="Tang S."/>
            <person name="Taylor M.S."/>
            <person name="Tegner J."/>
            <person name="Teichmann S.A."/>
            <person name="Ueda H.R."/>
            <person name="van Nimwegen E."/>
            <person name="Verardo R."/>
            <person name="Wei C.L."/>
            <person name="Yagi K."/>
            <person name="Yamanishi H."/>
            <person name="Zabarovsky E."/>
            <person name="Zhu S."/>
            <person name="Zimmer A."/>
            <person name="Hide W."/>
            <person name="Bult C."/>
            <person name="Grimmond S.M."/>
            <person name="Teasdale R.D."/>
            <person name="Liu E.T."/>
            <person name="Brusic V."/>
            <person name="Quackenbush J."/>
            <person name="Wahlestedt C."/>
            <person name="Mattick J.S."/>
            <person name="Hume D.A."/>
            <person name="Kai C."/>
            <person name="Sasaki D."/>
            <person name="Tomaru Y."/>
            <person name="Fukuda S."/>
            <person name="Kanamori-Katayama M."/>
            <person name="Suzuki M."/>
            <person name="Aoki J."/>
            <person name="Arakawa T."/>
            <person name="Iida J."/>
            <person name="Imamura K."/>
            <person name="Itoh M."/>
            <person name="Kato T."/>
            <person name="Kawaji H."/>
            <person name="Kawagashira N."/>
            <person name="Kawashima T."/>
            <person name="Kojima M."/>
            <person name="Kondo S."/>
            <person name="Konno H."/>
            <person name="Nakano K."/>
            <person name="Ninomiya N."/>
            <person name="Nishio T."/>
            <person name="Okada M."/>
            <person name="Plessy C."/>
            <person name="Shibata K."/>
            <person name="Shiraki T."/>
            <person name="Suzuki S."/>
            <person name="Tagami M."/>
            <person name="Waki K."/>
            <person name="Watahiki A."/>
            <person name="Okamura-Oho Y."/>
            <person name="Suzuki H."/>
            <person name="Kawai J."/>
            <person name="Hayashizaki Y."/>
        </authorList>
    </citation>
    <scope>NUCLEOTIDE SEQUENCE [LARGE SCALE MRNA]</scope>
    <source>
        <strain>C57BL/6J</strain>
        <strain>NOD</strain>
        <tissue>Forelimb</tissue>
        <tissue>Testis</tissue>
        <tissue>Thymus</tissue>
    </source>
</reference>
<reference key="3">
    <citation type="journal article" date="2004" name="Genome Res.">
        <title>The status, quality, and expansion of the NIH full-length cDNA project: the Mammalian Gene Collection (MGC).</title>
        <authorList>
            <consortium name="The MGC Project Team"/>
        </authorList>
    </citation>
    <scope>NUCLEOTIDE SEQUENCE [LARGE SCALE MRNA]</scope>
    <source>
        <strain>C57BL/6J</strain>
        <tissue>Brain</tissue>
    </source>
</reference>
<reference key="4">
    <citation type="journal article" date="2006" name="Nucleic Acids Res.">
        <title>Multiple pathways regulate intracellular shuttling of MoKA, a co-activator of transcription factor KLF7.</title>
        <authorList>
            <person name="Smaldone S."/>
            <person name="Ramirez F."/>
        </authorList>
    </citation>
    <scope>FUNCTION</scope>
    <scope>SUBCELLULAR LOCATION</scope>
    <scope>NUCLEAR LOCALIZATION SIGNAL</scope>
    <scope>NUCLEAR EXPORT SIGNALS</scope>
    <scope>MUTAGENESIS OF 194-LEU--LEU-196; 264-LEU--LEU-275 AND 902-LYS--LYS-904</scope>
</reference>
<reference key="5">
    <citation type="journal article" date="2010" name="Cell">
        <title>A tissue-specific atlas of mouse protein phosphorylation and expression.</title>
        <authorList>
            <person name="Huttlin E.L."/>
            <person name="Jedrychowski M.P."/>
            <person name="Elias J.E."/>
            <person name="Goswami T."/>
            <person name="Rad R."/>
            <person name="Beausoleil S.A."/>
            <person name="Villen J."/>
            <person name="Haas W."/>
            <person name="Sowa M.E."/>
            <person name="Gygi S.P."/>
        </authorList>
    </citation>
    <scope>PHOSPHORYLATION [LARGE SCALE ANALYSIS] AT THR-592; SER-599; SER-601; SER-607 AND SER-746</scope>
    <scope>IDENTIFICATION BY MASS SPECTROMETRY [LARGE SCALE ANALYSIS]</scope>
    <source>
        <tissue>Brain</tissue>
        <tissue>Kidney</tissue>
        <tissue>Liver</tissue>
        <tissue>Lung</tissue>
        <tissue>Spleen</tissue>
        <tissue>Testis</tissue>
    </source>
</reference>
<reference key="6">
    <citation type="journal article" date="2018" name="Nature">
        <title>FBXO38 mediates PD-1 ubiquitination and regulates anti-tumour immunity of T cells.</title>
        <authorList>
            <person name="Meng X."/>
            <person name="Liu X."/>
            <person name="Guo X."/>
            <person name="Jiang S."/>
            <person name="Chen T."/>
            <person name="Hu Z."/>
            <person name="Liu H."/>
            <person name="Bai Y."/>
            <person name="Xue M."/>
            <person name="Hu R."/>
            <person name="Sun S.C."/>
            <person name="Liu X."/>
            <person name="Zhou P."/>
            <person name="Huang X."/>
            <person name="Wei L."/>
            <person name="Yang W."/>
            <person name="Xu C."/>
        </authorList>
    </citation>
    <scope>FUNCTION</scope>
    <scope>DISRUPTION PHENOTYPE</scope>
    <scope>INDUCTION</scope>
</reference>